<reference key="1">
    <citation type="submission" date="2008-02" db="EMBL/GenBank/DDBJ databases">
        <title>Complete sequence of Escherichia coli C str. ATCC 8739.</title>
        <authorList>
            <person name="Copeland A."/>
            <person name="Lucas S."/>
            <person name="Lapidus A."/>
            <person name="Glavina del Rio T."/>
            <person name="Dalin E."/>
            <person name="Tice H."/>
            <person name="Bruce D."/>
            <person name="Goodwin L."/>
            <person name="Pitluck S."/>
            <person name="Kiss H."/>
            <person name="Brettin T."/>
            <person name="Detter J.C."/>
            <person name="Han C."/>
            <person name="Kuske C.R."/>
            <person name="Schmutz J."/>
            <person name="Larimer F."/>
            <person name="Land M."/>
            <person name="Hauser L."/>
            <person name="Kyrpides N."/>
            <person name="Mikhailova N."/>
            <person name="Ingram L."/>
            <person name="Richardson P."/>
        </authorList>
    </citation>
    <scope>NUCLEOTIDE SEQUENCE [LARGE SCALE GENOMIC DNA]</scope>
    <source>
        <strain>ATCC 8739 / DSM 1576 / NBRC 3972 / NCIMB 8545 / WDCM 00012 / Crooks</strain>
    </source>
</reference>
<proteinExistence type="evidence at protein level"/>
<keyword id="KW-0002">3D-structure</keyword>
<keyword id="KW-0963">Cytoplasm</keyword>
<keyword id="KW-0456">Lyase</keyword>
<keyword id="KW-0704">Schiff base</keyword>
<dbReference type="EC" id="4.1.2.4" evidence="1"/>
<dbReference type="EMBL" id="CP000946">
    <property type="protein sequence ID" value="ACA79286.1"/>
    <property type="molecule type" value="Genomic_DNA"/>
</dbReference>
<dbReference type="RefSeq" id="WP_001295412.1">
    <property type="nucleotide sequence ID" value="NZ_MTFT01000024.1"/>
</dbReference>
<dbReference type="PDB" id="9FD7">
    <property type="method" value="X-ray"/>
    <property type="resolution" value="1.40 A"/>
    <property type="chains" value="A/B=1-259"/>
</dbReference>
<dbReference type="PDB" id="9FD8">
    <property type="method" value="X-ray"/>
    <property type="resolution" value="1.58 A"/>
    <property type="chains" value="A/B=1-259"/>
</dbReference>
<dbReference type="PDB" id="9FD9">
    <property type="method" value="X-ray"/>
    <property type="resolution" value="1.52 A"/>
    <property type="chains" value="A/B=1-259"/>
</dbReference>
<dbReference type="PDBsum" id="9FD7"/>
<dbReference type="PDBsum" id="9FD8"/>
<dbReference type="PDBsum" id="9FD9"/>
<dbReference type="SMR" id="B1IS38"/>
<dbReference type="GeneID" id="93777463"/>
<dbReference type="KEGG" id="ecl:EcolC_3675"/>
<dbReference type="HOGENOM" id="CLU_053595_3_1_6"/>
<dbReference type="UniPathway" id="UPA00002">
    <property type="reaction ID" value="UER00468"/>
</dbReference>
<dbReference type="GO" id="GO:0005737">
    <property type="term" value="C:cytoplasm"/>
    <property type="evidence" value="ECO:0007669"/>
    <property type="project" value="UniProtKB-SubCell"/>
</dbReference>
<dbReference type="GO" id="GO:0004139">
    <property type="term" value="F:deoxyribose-phosphate aldolase activity"/>
    <property type="evidence" value="ECO:0007669"/>
    <property type="project" value="UniProtKB-UniRule"/>
</dbReference>
<dbReference type="GO" id="GO:0006018">
    <property type="term" value="P:2-deoxyribose 1-phosphate catabolic process"/>
    <property type="evidence" value="ECO:0007669"/>
    <property type="project" value="UniProtKB-UniRule"/>
</dbReference>
<dbReference type="GO" id="GO:0016052">
    <property type="term" value="P:carbohydrate catabolic process"/>
    <property type="evidence" value="ECO:0007669"/>
    <property type="project" value="TreeGrafter"/>
</dbReference>
<dbReference type="GO" id="GO:0009264">
    <property type="term" value="P:deoxyribonucleotide catabolic process"/>
    <property type="evidence" value="ECO:0007669"/>
    <property type="project" value="InterPro"/>
</dbReference>
<dbReference type="CDD" id="cd00959">
    <property type="entry name" value="DeoC"/>
    <property type="match status" value="1"/>
</dbReference>
<dbReference type="FunFam" id="3.20.20.70:FF:000034">
    <property type="entry name" value="Deoxyribose-phosphate aldolase"/>
    <property type="match status" value="1"/>
</dbReference>
<dbReference type="Gene3D" id="3.20.20.70">
    <property type="entry name" value="Aldolase class I"/>
    <property type="match status" value="1"/>
</dbReference>
<dbReference type="HAMAP" id="MF_00592">
    <property type="entry name" value="DeoC_type2"/>
    <property type="match status" value="1"/>
</dbReference>
<dbReference type="InterPro" id="IPR013785">
    <property type="entry name" value="Aldolase_TIM"/>
</dbReference>
<dbReference type="InterPro" id="IPR011343">
    <property type="entry name" value="DeoC"/>
</dbReference>
<dbReference type="InterPro" id="IPR002915">
    <property type="entry name" value="DeoC/FbaB/LacD_aldolase"/>
</dbReference>
<dbReference type="InterPro" id="IPR023649">
    <property type="entry name" value="DeoC_typeII"/>
</dbReference>
<dbReference type="NCBIfam" id="TIGR00126">
    <property type="entry name" value="deoC"/>
    <property type="match status" value="1"/>
</dbReference>
<dbReference type="PANTHER" id="PTHR10889">
    <property type="entry name" value="DEOXYRIBOSE-PHOSPHATE ALDOLASE"/>
    <property type="match status" value="1"/>
</dbReference>
<dbReference type="PANTHER" id="PTHR10889:SF3">
    <property type="entry name" value="DEOXYRIBOSE-PHOSPHATE ALDOLASE"/>
    <property type="match status" value="1"/>
</dbReference>
<dbReference type="Pfam" id="PF01791">
    <property type="entry name" value="DeoC"/>
    <property type="match status" value="1"/>
</dbReference>
<dbReference type="PIRSF" id="PIRSF001357">
    <property type="entry name" value="DeoC"/>
    <property type="match status" value="1"/>
</dbReference>
<dbReference type="SMART" id="SM01133">
    <property type="entry name" value="DeoC"/>
    <property type="match status" value="1"/>
</dbReference>
<dbReference type="SUPFAM" id="SSF51569">
    <property type="entry name" value="Aldolase"/>
    <property type="match status" value="1"/>
</dbReference>
<feature type="chain" id="PRO_1000082417" description="Deoxyribose-phosphate aldolase">
    <location>
        <begin position="1"/>
        <end position="259"/>
    </location>
</feature>
<feature type="active site" description="Proton donor/acceptor" evidence="1">
    <location>
        <position position="102"/>
    </location>
</feature>
<feature type="active site" description="Schiff-base intermediate with acetaldehyde" evidence="1">
    <location>
        <position position="167"/>
    </location>
</feature>
<feature type="active site" description="Proton donor/acceptor" evidence="1">
    <location>
        <position position="201"/>
    </location>
</feature>
<accession>B1IS38</accession>
<sequence length="259" mass="27748">MTDLKASSLRALKLMDLTTLNDDDTDEKVIALCHQAKTPVGNTAAICIYPRFIPIARKTLKEQGTPEIRIATVTNFPHGNDDIEIALAETRAAIAYGADEVDVVFPYRALMAGNEQVGFDLVKACKEACAAANVLLKVIIETGELKDEALIRKASEISIKAGADFIKTSTGKVAVNATPESARIMMEVIRDMGVEKTVGFKPAGGVRTAEDAQKYLAIADELFGADWADARHYRFGASSLLASLLKALGHGDGKSASSY</sequence>
<gene>
    <name evidence="1" type="primary">deoC</name>
    <name type="ordered locus">EcolC_3675</name>
</gene>
<protein>
    <recommendedName>
        <fullName evidence="1">Deoxyribose-phosphate aldolase</fullName>
        <shortName evidence="1">DERA</shortName>
        <ecNumber evidence="1">4.1.2.4</ecNumber>
    </recommendedName>
    <alternativeName>
        <fullName evidence="1">2-deoxy-D-ribose 5-phosphate aldolase</fullName>
    </alternativeName>
    <alternativeName>
        <fullName evidence="1">Phosphodeoxyriboaldolase</fullName>
        <shortName evidence="1">Deoxyriboaldolase</shortName>
    </alternativeName>
</protein>
<name>DEOC_ECOLC</name>
<organism>
    <name type="scientific">Escherichia coli (strain ATCC 8739 / DSM 1576 / NBRC 3972 / NCIMB 8545 / WDCM 00012 / Crooks)</name>
    <dbReference type="NCBI Taxonomy" id="481805"/>
    <lineage>
        <taxon>Bacteria</taxon>
        <taxon>Pseudomonadati</taxon>
        <taxon>Pseudomonadota</taxon>
        <taxon>Gammaproteobacteria</taxon>
        <taxon>Enterobacterales</taxon>
        <taxon>Enterobacteriaceae</taxon>
        <taxon>Escherichia</taxon>
    </lineage>
</organism>
<evidence type="ECO:0000255" key="1">
    <source>
        <dbReference type="HAMAP-Rule" id="MF_00592"/>
    </source>
</evidence>
<comment type="function">
    <text evidence="1">Catalyzes a reversible aldol reaction between acetaldehyde and D-glyceraldehyde 3-phosphate to generate 2-deoxy-D-ribose 5-phosphate.</text>
</comment>
<comment type="catalytic activity">
    <reaction evidence="1">
        <text>2-deoxy-D-ribose 5-phosphate = D-glyceraldehyde 3-phosphate + acetaldehyde</text>
        <dbReference type="Rhea" id="RHEA:12821"/>
        <dbReference type="ChEBI" id="CHEBI:15343"/>
        <dbReference type="ChEBI" id="CHEBI:59776"/>
        <dbReference type="ChEBI" id="CHEBI:62877"/>
        <dbReference type="EC" id="4.1.2.4"/>
    </reaction>
</comment>
<comment type="pathway">
    <text evidence="1">Carbohydrate degradation; 2-deoxy-D-ribose 1-phosphate degradation; D-glyceraldehyde 3-phosphate and acetaldehyde from 2-deoxy-alpha-D-ribose 1-phosphate: step 2/2.</text>
</comment>
<comment type="subcellular location">
    <subcellularLocation>
        <location evidence="1">Cytoplasm</location>
    </subcellularLocation>
</comment>
<comment type="similarity">
    <text evidence="1">Belongs to the DeoC/FbaB aldolase family. DeoC type 2 subfamily.</text>
</comment>